<protein>
    <recommendedName>
        <fullName evidence="1">S-adenosylmethionine:tRNA ribosyltransferase-isomerase</fullName>
        <ecNumber evidence="1">2.4.99.17</ecNumber>
    </recommendedName>
    <alternativeName>
        <fullName evidence="1">Queuosine biosynthesis protein QueA</fullName>
    </alternativeName>
</protein>
<comment type="function">
    <text evidence="1">Transfers and isomerizes the ribose moiety from AdoMet to the 7-aminomethyl group of 7-deazaguanine (preQ1-tRNA) to give epoxyqueuosine (oQ-tRNA).</text>
</comment>
<comment type="catalytic activity">
    <reaction evidence="1">
        <text>7-aminomethyl-7-carbaguanosine(34) in tRNA + S-adenosyl-L-methionine = epoxyqueuosine(34) in tRNA + adenine + L-methionine + 2 H(+)</text>
        <dbReference type="Rhea" id="RHEA:32155"/>
        <dbReference type="Rhea" id="RHEA-COMP:10342"/>
        <dbReference type="Rhea" id="RHEA-COMP:18582"/>
        <dbReference type="ChEBI" id="CHEBI:15378"/>
        <dbReference type="ChEBI" id="CHEBI:16708"/>
        <dbReference type="ChEBI" id="CHEBI:57844"/>
        <dbReference type="ChEBI" id="CHEBI:59789"/>
        <dbReference type="ChEBI" id="CHEBI:82833"/>
        <dbReference type="ChEBI" id="CHEBI:194443"/>
        <dbReference type="EC" id="2.4.99.17"/>
    </reaction>
</comment>
<comment type="pathway">
    <text evidence="1">tRNA modification; tRNA-queuosine biosynthesis.</text>
</comment>
<comment type="subunit">
    <text evidence="1">Monomer.</text>
</comment>
<comment type="subcellular location">
    <subcellularLocation>
        <location evidence="1">Cytoplasm</location>
    </subcellularLocation>
</comment>
<comment type="similarity">
    <text evidence="1">Belongs to the QueA family.</text>
</comment>
<feature type="chain" id="PRO_0000165433" description="S-adenosylmethionine:tRNA ribosyltransferase-isomerase">
    <location>
        <begin position="1"/>
        <end position="383"/>
    </location>
</feature>
<reference key="1">
    <citation type="journal article" date="1998" name="Nature">
        <title>The genome sequence of Rickettsia prowazekii and the origin of mitochondria.</title>
        <authorList>
            <person name="Andersson S.G.E."/>
            <person name="Zomorodipour A."/>
            <person name="Andersson J.O."/>
            <person name="Sicheritz-Ponten T."/>
            <person name="Alsmark U.C.M."/>
            <person name="Podowski R.M."/>
            <person name="Naeslund A.K."/>
            <person name="Eriksson A.-S."/>
            <person name="Winkler H.H."/>
            <person name="Kurland C.G."/>
        </authorList>
    </citation>
    <scope>NUCLEOTIDE SEQUENCE [LARGE SCALE GENOMIC DNA]</scope>
    <source>
        <strain>Madrid E</strain>
    </source>
</reference>
<name>QUEA_RICPR</name>
<keyword id="KW-0963">Cytoplasm</keyword>
<keyword id="KW-0671">Queuosine biosynthesis</keyword>
<keyword id="KW-1185">Reference proteome</keyword>
<keyword id="KW-0949">S-adenosyl-L-methionine</keyword>
<keyword id="KW-0808">Transferase</keyword>
<accession>Q9ZDV6</accession>
<dbReference type="EC" id="2.4.99.17" evidence="1"/>
<dbReference type="EMBL" id="AJ235270">
    <property type="protein sequence ID" value="CAA14676.1"/>
    <property type="molecule type" value="Genomic_DNA"/>
</dbReference>
<dbReference type="PIR" id="E71732">
    <property type="entry name" value="E71732"/>
</dbReference>
<dbReference type="RefSeq" id="NP_220599.1">
    <property type="nucleotide sequence ID" value="NC_000963.1"/>
</dbReference>
<dbReference type="RefSeq" id="WP_004595999.1">
    <property type="nucleotide sequence ID" value="NC_000963.1"/>
</dbReference>
<dbReference type="SMR" id="Q9ZDV6"/>
<dbReference type="STRING" id="272947.gene:17555294"/>
<dbReference type="EnsemblBacteria" id="CAA14676">
    <property type="protein sequence ID" value="CAA14676"/>
    <property type="gene ID" value="CAA14676"/>
</dbReference>
<dbReference type="GeneID" id="57569341"/>
<dbReference type="KEGG" id="rpr:RP213"/>
<dbReference type="PATRIC" id="fig|272947.5.peg.220"/>
<dbReference type="eggNOG" id="COG0809">
    <property type="taxonomic scope" value="Bacteria"/>
</dbReference>
<dbReference type="HOGENOM" id="CLU_039110_1_0_5"/>
<dbReference type="OrthoDB" id="9805933at2"/>
<dbReference type="UniPathway" id="UPA00392"/>
<dbReference type="Proteomes" id="UP000002480">
    <property type="component" value="Chromosome"/>
</dbReference>
<dbReference type="GO" id="GO:0005737">
    <property type="term" value="C:cytoplasm"/>
    <property type="evidence" value="ECO:0007669"/>
    <property type="project" value="UniProtKB-SubCell"/>
</dbReference>
<dbReference type="GO" id="GO:0051075">
    <property type="term" value="F:S-adenosylmethionine:tRNA ribosyltransferase-isomerase activity"/>
    <property type="evidence" value="ECO:0007669"/>
    <property type="project" value="UniProtKB-EC"/>
</dbReference>
<dbReference type="GO" id="GO:0008616">
    <property type="term" value="P:queuosine biosynthetic process"/>
    <property type="evidence" value="ECO:0007669"/>
    <property type="project" value="UniProtKB-UniRule"/>
</dbReference>
<dbReference type="GO" id="GO:0002099">
    <property type="term" value="P:tRNA wobble guanine modification"/>
    <property type="evidence" value="ECO:0007669"/>
    <property type="project" value="TreeGrafter"/>
</dbReference>
<dbReference type="FunFam" id="3.40.1780.10:FF:000001">
    <property type="entry name" value="S-adenosylmethionine:tRNA ribosyltransferase-isomerase"/>
    <property type="match status" value="1"/>
</dbReference>
<dbReference type="Gene3D" id="2.40.10.240">
    <property type="entry name" value="QueA-like"/>
    <property type="match status" value="1"/>
</dbReference>
<dbReference type="Gene3D" id="3.40.1780.10">
    <property type="entry name" value="QueA-like"/>
    <property type="match status" value="1"/>
</dbReference>
<dbReference type="HAMAP" id="MF_00113">
    <property type="entry name" value="QueA"/>
    <property type="match status" value="1"/>
</dbReference>
<dbReference type="InterPro" id="IPR003699">
    <property type="entry name" value="QueA"/>
</dbReference>
<dbReference type="InterPro" id="IPR042118">
    <property type="entry name" value="QueA_dom1"/>
</dbReference>
<dbReference type="InterPro" id="IPR042119">
    <property type="entry name" value="QueA_dom2"/>
</dbReference>
<dbReference type="InterPro" id="IPR036100">
    <property type="entry name" value="QueA_sf"/>
</dbReference>
<dbReference type="NCBIfam" id="NF002398">
    <property type="entry name" value="PRK01424.1"/>
    <property type="match status" value="1"/>
</dbReference>
<dbReference type="PANTHER" id="PTHR30307">
    <property type="entry name" value="S-ADENOSYLMETHIONINE:TRNA RIBOSYLTRANSFERASE-ISOMERASE"/>
    <property type="match status" value="1"/>
</dbReference>
<dbReference type="PANTHER" id="PTHR30307:SF0">
    <property type="entry name" value="S-ADENOSYLMETHIONINE:TRNA RIBOSYLTRANSFERASE-ISOMERASE"/>
    <property type="match status" value="1"/>
</dbReference>
<dbReference type="Pfam" id="PF02547">
    <property type="entry name" value="Queuosine_synth"/>
    <property type="match status" value="1"/>
</dbReference>
<dbReference type="SUPFAM" id="SSF111337">
    <property type="entry name" value="QueA-like"/>
    <property type="match status" value="1"/>
</dbReference>
<proteinExistence type="inferred from homology"/>
<evidence type="ECO:0000255" key="1">
    <source>
        <dbReference type="HAMAP-Rule" id="MF_00113"/>
    </source>
</evidence>
<gene>
    <name evidence="1" type="primary">queA</name>
    <name type="ordered locus">RP213</name>
</gene>
<sequence length="383" mass="43321">MKLSDFDFNLPSALIAQYPSSERDNSDLLIAGTKHIKTKFYNIIDYLKKGDLLVFNNSKVIKAKLHLGKNITINLNKKLSDNCWIAFAKPARKLNIGDEFYFDTHKIIITEKLAIGEIKVKFMLDNISIIKFLDKYGEIPLPFYIKRPSPVCYSNMALCCKPENTLKIKSIPHNMSKIVTNNSNTVNLRSNDGIIDSTNDNDRYQTIYSQIEGSVAAPTAGLHFTKNILDKLKTKGVHTAFVTLHVGAGTFLPVKTENIHEHKMHTEYCSITTETAEIINKTKQEGRSIIAVGTTTLRTIESACNNGIVRAGNFETDIFITPGFNFQVVDMLLTNFHFPKSTLFILICAFAGFKEMHALYKYAIKEKMRFFSYGDATLLYRKV</sequence>
<organism>
    <name type="scientific">Rickettsia prowazekii (strain Madrid E)</name>
    <dbReference type="NCBI Taxonomy" id="272947"/>
    <lineage>
        <taxon>Bacteria</taxon>
        <taxon>Pseudomonadati</taxon>
        <taxon>Pseudomonadota</taxon>
        <taxon>Alphaproteobacteria</taxon>
        <taxon>Rickettsiales</taxon>
        <taxon>Rickettsiaceae</taxon>
        <taxon>Rickettsieae</taxon>
        <taxon>Rickettsia</taxon>
        <taxon>typhus group</taxon>
    </lineage>
</organism>